<evidence type="ECO:0000255" key="1">
    <source>
        <dbReference type="HAMAP-Rule" id="MF_00156"/>
    </source>
</evidence>
<feature type="chain" id="PRO_0000297323" description="3-methyl-2-oxobutanoate hydroxymethyltransferase">
    <location>
        <begin position="1"/>
        <end position="257"/>
    </location>
</feature>
<feature type="active site" description="Proton acceptor" evidence="1">
    <location>
        <position position="185"/>
    </location>
</feature>
<feature type="binding site" evidence="1">
    <location>
        <begin position="42"/>
        <end position="43"/>
    </location>
    <ligand>
        <name>3-methyl-2-oxobutanoate</name>
        <dbReference type="ChEBI" id="CHEBI:11851"/>
    </ligand>
</feature>
<feature type="binding site" evidence="1">
    <location>
        <position position="42"/>
    </location>
    <ligand>
        <name>Mg(2+)</name>
        <dbReference type="ChEBI" id="CHEBI:18420"/>
    </ligand>
</feature>
<feature type="binding site" evidence="1">
    <location>
        <position position="86"/>
    </location>
    <ligand>
        <name>3-methyl-2-oxobutanoate</name>
        <dbReference type="ChEBI" id="CHEBI:11851"/>
    </ligand>
</feature>
<feature type="binding site" evidence="1">
    <location>
        <position position="86"/>
    </location>
    <ligand>
        <name>Mg(2+)</name>
        <dbReference type="ChEBI" id="CHEBI:18420"/>
    </ligand>
</feature>
<feature type="binding site" evidence="1">
    <location>
        <position position="116"/>
    </location>
    <ligand>
        <name>3-methyl-2-oxobutanoate</name>
        <dbReference type="ChEBI" id="CHEBI:11851"/>
    </ligand>
</feature>
<feature type="binding site" evidence="1">
    <location>
        <position position="118"/>
    </location>
    <ligand>
        <name>Mg(2+)</name>
        <dbReference type="ChEBI" id="CHEBI:18420"/>
    </ligand>
</feature>
<dbReference type="EC" id="2.1.2.11" evidence="1"/>
<dbReference type="EMBL" id="CP000576">
    <property type="protein sequence ID" value="ABO18119.1"/>
    <property type="molecule type" value="Genomic_DNA"/>
</dbReference>
<dbReference type="RefSeq" id="WP_011863426.1">
    <property type="nucleotide sequence ID" value="NC_009091.1"/>
</dbReference>
<dbReference type="SMR" id="A3PEE4"/>
<dbReference type="STRING" id="167546.P9301_14961"/>
<dbReference type="KEGG" id="pmg:P9301_14961"/>
<dbReference type="eggNOG" id="COG0413">
    <property type="taxonomic scope" value="Bacteria"/>
</dbReference>
<dbReference type="HOGENOM" id="CLU_036645_1_0_3"/>
<dbReference type="OrthoDB" id="9781789at2"/>
<dbReference type="UniPathway" id="UPA00028">
    <property type="reaction ID" value="UER00003"/>
</dbReference>
<dbReference type="Proteomes" id="UP000001430">
    <property type="component" value="Chromosome"/>
</dbReference>
<dbReference type="GO" id="GO:0005737">
    <property type="term" value="C:cytoplasm"/>
    <property type="evidence" value="ECO:0007669"/>
    <property type="project" value="UniProtKB-SubCell"/>
</dbReference>
<dbReference type="GO" id="GO:0003864">
    <property type="term" value="F:3-methyl-2-oxobutanoate hydroxymethyltransferase activity"/>
    <property type="evidence" value="ECO:0007669"/>
    <property type="project" value="UniProtKB-UniRule"/>
</dbReference>
<dbReference type="GO" id="GO:0000287">
    <property type="term" value="F:magnesium ion binding"/>
    <property type="evidence" value="ECO:0007669"/>
    <property type="project" value="TreeGrafter"/>
</dbReference>
<dbReference type="GO" id="GO:0015940">
    <property type="term" value="P:pantothenate biosynthetic process"/>
    <property type="evidence" value="ECO:0007669"/>
    <property type="project" value="UniProtKB-UniRule"/>
</dbReference>
<dbReference type="CDD" id="cd06557">
    <property type="entry name" value="KPHMT-like"/>
    <property type="match status" value="1"/>
</dbReference>
<dbReference type="Gene3D" id="3.20.20.60">
    <property type="entry name" value="Phosphoenolpyruvate-binding domains"/>
    <property type="match status" value="1"/>
</dbReference>
<dbReference type="HAMAP" id="MF_00156">
    <property type="entry name" value="PanB"/>
    <property type="match status" value="1"/>
</dbReference>
<dbReference type="InterPro" id="IPR003700">
    <property type="entry name" value="Pantoate_hydroxy_MeTrfase"/>
</dbReference>
<dbReference type="InterPro" id="IPR015813">
    <property type="entry name" value="Pyrv/PenolPyrv_kinase-like_dom"/>
</dbReference>
<dbReference type="InterPro" id="IPR040442">
    <property type="entry name" value="Pyrv_kinase-like_dom_sf"/>
</dbReference>
<dbReference type="NCBIfam" id="TIGR00222">
    <property type="entry name" value="panB"/>
    <property type="match status" value="1"/>
</dbReference>
<dbReference type="NCBIfam" id="NF001452">
    <property type="entry name" value="PRK00311.1"/>
    <property type="match status" value="1"/>
</dbReference>
<dbReference type="PANTHER" id="PTHR20881">
    <property type="entry name" value="3-METHYL-2-OXOBUTANOATE HYDROXYMETHYLTRANSFERASE"/>
    <property type="match status" value="1"/>
</dbReference>
<dbReference type="PANTHER" id="PTHR20881:SF0">
    <property type="entry name" value="3-METHYL-2-OXOBUTANOATE HYDROXYMETHYLTRANSFERASE"/>
    <property type="match status" value="1"/>
</dbReference>
<dbReference type="Pfam" id="PF02548">
    <property type="entry name" value="Pantoate_transf"/>
    <property type="match status" value="1"/>
</dbReference>
<dbReference type="PIRSF" id="PIRSF000388">
    <property type="entry name" value="Pantoate_hydroxy_MeTrfase"/>
    <property type="match status" value="1"/>
</dbReference>
<dbReference type="SUPFAM" id="SSF51621">
    <property type="entry name" value="Phosphoenolpyruvate/pyruvate domain"/>
    <property type="match status" value="1"/>
</dbReference>
<accession>A3PEE4</accession>
<comment type="function">
    <text evidence="1">Catalyzes the reversible reaction in which hydroxymethyl group from 5,10-methylenetetrahydrofolate is transferred onto alpha-ketoisovalerate to form ketopantoate.</text>
</comment>
<comment type="catalytic activity">
    <reaction evidence="1">
        <text>3-methyl-2-oxobutanoate + (6R)-5,10-methylene-5,6,7,8-tetrahydrofolate + H2O = 2-dehydropantoate + (6S)-5,6,7,8-tetrahydrofolate</text>
        <dbReference type="Rhea" id="RHEA:11824"/>
        <dbReference type="ChEBI" id="CHEBI:11561"/>
        <dbReference type="ChEBI" id="CHEBI:11851"/>
        <dbReference type="ChEBI" id="CHEBI:15377"/>
        <dbReference type="ChEBI" id="CHEBI:15636"/>
        <dbReference type="ChEBI" id="CHEBI:57453"/>
        <dbReference type="EC" id="2.1.2.11"/>
    </reaction>
</comment>
<comment type="cofactor">
    <cofactor evidence="1">
        <name>Mg(2+)</name>
        <dbReference type="ChEBI" id="CHEBI:18420"/>
    </cofactor>
    <text evidence="1">Binds 1 Mg(2+) ion per subunit.</text>
</comment>
<comment type="pathway">
    <text evidence="1">Cofactor biosynthesis; (R)-pantothenate biosynthesis; (R)-pantoate from 3-methyl-2-oxobutanoate: step 1/2.</text>
</comment>
<comment type="subunit">
    <text evidence="1">Homodecamer; pentamer of dimers.</text>
</comment>
<comment type="subcellular location">
    <subcellularLocation>
        <location evidence="1">Cytoplasm</location>
    </subcellularLocation>
</comment>
<comment type="similarity">
    <text evidence="1">Belongs to the PanB family.</text>
</comment>
<keyword id="KW-0963">Cytoplasm</keyword>
<keyword id="KW-0460">Magnesium</keyword>
<keyword id="KW-0479">Metal-binding</keyword>
<keyword id="KW-0566">Pantothenate biosynthesis</keyword>
<keyword id="KW-1185">Reference proteome</keyword>
<keyword id="KW-0808">Transferase</keyword>
<organism>
    <name type="scientific">Prochlorococcus marinus (strain MIT 9301)</name>
    <dbReference type="NCBI Taxonomy" id="167546"/>
    <lineage>
        <taxon>Bacteria</taxon>
        <taxon>Bacillati</taxon>
        <taxon>Cyanobacteriota</taxon>
        <taxon>Cyanophyceae</taxon>
        <taxon>Synechococcales</taxon>
        <taxon>Prochlorococcaceae</taxon>
        <taxon>Prochlorococcus</taxon>
    </lineage>
</organism>
<proteinExistence type="inferred from homology"/>
<sequence>MLPSDLVNYKKKSRKIIALTAWDSISGSIAEQANVDLVLVGDSLAMVCLGYQSTLPITLENIIYHTNAVSRGFKKKIEEQPLVVSDMPFMTYQCGEDKAVEYAGKIIQSTYAKAVKVEGAEPEIQKVISRLIRMGIPVMGHIGLTPQSYLNIGLRKQGESLASQEKIKKEASILEELGCFSIVLEHIPDLLAKEIQNSLTIPTIGIGAGNYCDGQVRVTADLLGLNDDQPPFCQPIIQGKKLFKDKLKEWVDSERLS</sequence>
<name>PANB_PROM0</name>
<reference key="1">
    <citation type="journal article" date="2007" name="PLoS Genet.">
        <title>Patterns and implications of gene gain and loss in the evolution of Prochlorococcus.</title>
        <authorList>
            <person name="Kettler G.C."/>
            <person name="Martiny A.C."/>
            <person name="Huang K."/>
            <person name="Zucker J."/>
            <person name="Coleman M.L."/>
            <person name="Rodrigue S."/>
            <person name="Chen F."/>
            <person name="Lapidus A."/>
            <person name="Ferriera S."/>
            <person name="Johnson J."/>
            <person name="Steglich C."/>
            <person name="Church G.M."/>
            <person name="Richardson P."/>
            <person name="Chisholm S.W."/>
        </authorList>
    </citation>
    <scope>NUCLEOTIDE SEQUENCE [LARGE SCALE GENOMIC DNA]</scope>
    <source>
        <strain>MIT 9301</strain>
    </source>
</reference>
<gene>
    <name evidence="1" type="primary">panB</name>
    <name type="ordered locus">P9301_14961</name>
</gene>
<protein>
    <recommendedName>
        <fullName evidence="1">3-methyl-2-oxobutanoate hydroxymethyltransferase</fullName>
        <ecNumber evidence="1">2.1.2.11</ecNumber>
    </recommendedName>
    <alternativeName>
        <fullName evidence="1">Ketopantoate hydroxymethyltransferase</fullName>
        <shortName evidence="1">KPHMT</shortName>
    </alternativeName>
</protein>